<evidence type="ECO:0000250" key="1"/>
<evidence type="ECO:0000255" key="2">
    <source>
        <dbReference type="PROSITE-ProRule" id="PRU10102"/>
    </source>
</evidence>
<evidence type="ECO:0000269" key="3">
    <source>
    </source>
</evidence>
<evidence type="ECO:0000305" key="4"/>
<evidence type="ECO:0000305" key="5">
    <source>
    </source>
</evidence>
<gene>
    <name type="primary">ampC</name>
    <name type="synonym">bla</name>
</gene>
<dbReference type="EC" id="3.5.2.6"/>
<dbReference type="EMBL" id="X83586">
    <property type="protein sequence ID" value="CAA58569.1"/>
    <property type="molecule type" value="Genomic_DNA"/>
</dbReference>
<dbReference type="SMR" id="O05465"/>
<dbReference type="MEROPS" id="S12.006"/>
<dbReference type="GO" id="GO:0005576">
    <property type="term" value="C:extracellular region"/>
    <property type="evidence" value="ECO:0007669"/>
    <property type="project" value="UniProtKB-SubCell"/>
</dbReference>
<dbReference type="GO" id="GO:0030288">
    <property type="term" value="C:outer membrane-bounded periplasmic space"/>
    <property type="evidence" value="ECO:0007669"/>
    <property type="project" value="InterPro"/>
</dbReference>
<dbReference type="GO" id="GO:0008800">
    <property type="term" value="F:beta-lactamase activity"/>
    <property type="evidence" value="ECO:0007669"/>
    <property type="project" value="UniProtKB-EC"/>
</dbReference>
<dbReference type="GO" id="GO:0017001">
    <property type="term" value="P:antibiotic catabolic process"/>
    <property type="evidence" value="ECO:0007669"/>
    <property type="project" value="InterPro"/>
</dbReference>
<dbReference type="GO" id="GO:0046677">
    <property type="term" value="P:response to antibiotic"/>
    <property type="evidence" value="ECO:0007669"/>
    <property type="project" value="UniProtKB-KW"/>
</dbReference>
<dbReference type="Gene3D" id="3.40.710.10">
    <property type="entry name" value="DD-peptidase/beta-lactamase superfamily"/>
    <property type="match status" value="1"/>
</dbReference>
<dbReference type="InterPro" id="IPR050491">
    <property type="entry name" value="Bact_CellWall_Synth/Modif"/>
</dbReference>
<dbReference type="InterPro" id="IPR001466">
    <property type="entry name" value="Beta-lactam-related"/>
</dbReference>
<dbReference type="InterPro" id="IPR012338">
    <property type="entry name" value="Beta-lactam/transpept-like"/>
</dbReference>
<dbReference type="InterPro" id="IPR001586">
    <property type="entry name" value="Beta-lactam_class-C_AS"/>
</dbReference>
<dbReference type="NCBIfam" id="NF033085">
    <property type="entry name" value="bla_class_C"/>
    <property type="match status" value="1"/>
</dbReference>
<dbReference type="PANTHER" id="PTHR46825:SF8">
    <property type="entry name" value="BETA-LACTAMASE-RELATED"/>
    <property type="match status" value="1"/>
</dbReference>
<dbReference type="PANTHER" id="PTHR46825">
    <property type="entry name" value="D-ALANYL-D-ALANINE-CARBOXYPEPTIDASE/ENDOPEPTIDASE AMPH"/>
    <property type="match status" value="1"/>
</dbReference>
<dbReference type="Pfam" id="PF00144">
    <property type="entry name" value="Beta-lactamase"/>
    <property type="match status" value="1"/>
</dbReference>
<dbReference type="SUPFAM" id="SSF56601">
    <property type="entry name" value="beta-lactamase/transpeptidase-like"/>
    <property type="match status" value="1"/>
</dbReference>
<dbReference type="PROSITE" id="PS00336">
    <property type="entry name" value="BETA_LACTAMASE_C"/>
    <property type="match status" value="1"/>
</dbReference>
<comment type="function">
    <text>This protein is a serine beta-lactamase with a substrate specificity for cephalosporins.</text>
</comment>
<comment type="catalytic activity">
    <reaction evidence="2">
        <text>a beta-lactam + H2O = a substituted beta-amino acid</text>
        <dbReference type="Rhea" id="RHEA:20401"/>
        <dbReference type="ChEBI" id="CHEBI:15377"/>
        <dbReference type="ChEBI" id="CHEBI:35627"/>
        <dbReference type="ChEBI" id="CHEBI:140347"/>
        <dbReference type="EC" id="3.5.2.6"/>
    </reaction>
</comment>
<comment type="subcellular location">
    <subcellularLocation>
        <location>Secreted</location>
    </subcellularLocation>
</comment>
<comment type="miscellaneous">
    <text evidence="5">The class C beta-lactamase family has a specific amino-acid numbering system known as SANC, for structural alignment-based numbering of class C beta-lactamases, or else the simpler name structural position. A multiple sequence alignment was used to derive a consensus sequence and then the consensus was numbered taking into account insertions and deletions. This allows use of identical numbers, e.g. for active site residues, despite differences in protein length. UniProt always uses natural numbering of residues, hence there appear to be differences in numbering between this entry and some papers.</text>
</comment>
<comment type="similarity">
    <text evidence="4">Belongs to the class-C beta-lactamase family.</text>
</comment>
<sequence>MKLFTSTLTAKKSSTHKPLISLALSVLISTLLISETAQAADANDRLEQEVDKQAKQLMAQYQIPGMAFGIIVDGKSHFYNYGLADKQRNQPVSEDTIFELGSVSKTFAATLASYSELNGTLSLDDTADKYIPYLKNSAIGNTKLISLVTYSAGGYHYRCLKTLENNKELLQYYKSWHPDFPVNSKRLYSNASIGLFGYISALSMHSDYTKLIENTVLPSLKMTNTFVDVPANKMEDYAFGYNAAGEPIRVNPGMLDAEAYGIKSTSADMTRFMAANMGLVTVDSQMQQALDNNRKGYYRTKSFTQGLAWEMYPLPTTLQQLVEGNSTETILQPQPIQLNEPPTPVLNDVWVNKTGATNGFGAYIAYMPAKKTGMFILANKNYPNTERVKAAYTILDSVMNN</sequence>
<reference key="1">
    <citation type="journal article" date="1997" name="Eur. J. Biochem.">
        <title>Enzymes from cold-adapted microorganisms. The class C beta-lactamase from the antarctic psychrophile Psychrobacter immobilis A5.</title>
        <authorList>
            <person name="Feller G."/>
            <person name="Zekhnini Z."/>
            <person name="Lamotte-Brasseur J."/>
            <person name="Gerday C."/>
        </authorList>
    </citation>
    <scope>NUCLEOTIDE SEQUENCE [GENOMIC DNA]</scope>
    <scope>PROTEIN SEQUENCE OF 40-47</scope>
    <scope>CHARACTERIZATION</scope>
    <source>
        <strain>A5</strain>
    </source>
</reference>
<reference key="2">
    <citation type="journal article" date="2020" name="Antimicrob. Agents Chemother.">
        <title>A Standard Numbering Scheme for Class C beta-Lactamases.</title>
        <authorList>
            <person name="Mack A.R."/>
            <person name="Barnes M.D."/>
            <person name="Taracila M.A."/>
            <person name="Hujer A.M."/>
            <person name="Hujer K.M."/>
            <person name="Cabot G."/>
            <person name="Feldgarden M."/>
            <person name="Haft D.H."/>
            <person name="Klimke W."/>
            <person name="van den Akker F."/>
            <person name="Vila A.J."/>
            <person name="Smania A."/>
            <person name="Haider S."/>
            <person name="Papp-Wallace K.M."/>
            <person name="Bradford P.A."/>
            <person name="Rossolini G.M."/>
            <person name="Docquier J.D."/>
            <person name="Frere J.M."/>
            <person name="Galleni M."/>
            <person name="Hanson N.D."/>
            <person name="Oliver A."/>
            <person name="Plesiat P."/>
            <person name="Poirel L."/>
            <person name="Nordmann P."/>
            <person name="Palzkill T.G."/>
            <person name="Jacoby G.A."/>
            <person name="Bush K."/>
            <person name="Bonomo R.A."/>
        </authorList>
    </citation>
    <scope>AMINO ACID NUMBERING SCHEME</scope>
</reference>
<accession>O05465</accession>
<organism>
    <name type="scientific">Psychrobacter immobilis</name>
    <dbReference type="NCBI Taxonomy" id="498"/>
    <lineage>
        <taxon>Bacteria</taxon>
        <taxon>Pseudomonadati</taxon>
        <taxon>Pseudomonadota</taxon>
        <taxon>Gammaproteobacteria</taxon>
        <taxon>Moraxellales</taxon>
        <taxon>Moraxellaceae</taxon>
        <taxon>Psychrobacter</taxon>
    </lineage>
</organism>
<proteinExistence type="evidence at protein level"/>
<name>AMPC_PSYIM</name>
<feature type="signal peptide" evidence="3">
    <location>
        <begin position="1"/>
        <end position="39"/>
    </location>
</feature>
<feature type="chain" id="PRO_0000016964" description="Beta-lactamase">
    <location>
        <begin position="40"/>
        <end position="401"/>
    </location>
</feature>
<feature type="active site" description="Acyl-ester intermediate" evidence="2">
    <location>
        <position position="102"/>
    </location>
</feature>
<feature type="active site" description="Proton acceptor" evidence="1">
    <location>
        <position position="188"/>
    </location>
</feature>
<feature type="binding site" evidence="1">
    <location>
        <begin position="353"/>
        <end position="355"/>
    </location>
    <ligand>
        <name>substrate</name>
    </ligand>
</feature>
<protein>
    <recommendedName>
        <fullName>Beta-lactamase</fullName>
        <ecNumber>3.5.2.6</ecNumber>
    </recommendedName>
    <alternativeName>
        <fullName>Cephalosporinase</fullName>
    </alternativeName>
</protein>
<keyword id="KW-0046">Antibiotic resistance</keyword>
<keyword id="KW-0903">Direct protein sequencing</keyword>
<keyword id="KW-0378">Hydrolase</keyword>
<keyword id="KW-0964">Secreted</keyword>
<keyword id="KW-0732">Signal</keyword>